<proteinExistence type="inferred from homology"/>
<name>YDHX_ECO57</name>
<organism>
    <name type="scientific">Escherichia coli O157:H7</name>
    <dbReference type="NCBI Taxonomy" id="83334"/>
    <lineage>
        <taxon>Bacteria</taxon>
        <taxon>Pseudomonadati</taxon>
        <taxon>Pseudomonadota</taxon>
        <taxon>Gammaproteobacteria</taxon>
        <taxon>Enterobacterales</taxon>
        <taxon>Enterobacteriaceae</taxon>
        <taxon>Escherichia</taxon>
    </lineage>
</organism>
<protein>
    <recommendedName>
        <fullName>Uncharacterized ferredoxin-like protein YdhX</fullName>
    </recommendedName>
</protein>
<evidence type="ECO:0000250" key="1"/>
<evidence type="ECO:0000255" key="2"/>
<evidence type="ECO:0000255" key="3">
    <source>
        <dbReference type="PROSITE-ProRule" id="PRU00711"/>
    </source>
</evidence>
<evidence type="ECO:0000305" key="4"/>
<feature type="signal peptide" description="Tat-type signal" evidence="2">
    <location>
        <begin position="1"/>
        <end position="27"/>
    </location>
</feature>
<feature type="chain" id="PRO_0000159296" description="Uncharacterized ferredoxin-like protein YdhX">
    <location>
        <begin position="28"/>
        <end position="222"/>
    </location>
</feature>
<feature type="domain" description="4Fe-4S ferredoxin-type 1" evidence="3">
    <location>
        <begin position="37"/>
        <end position="66"/>
    </location>
</feature>
<feature type="domain" description="4Fe-4S ferredoxin-type 2" evidence="3">
    <location>
        <begin position="83"/>
        <end position="114"/>
    </location>
</feature>
<feature type="domain" description="4Fe-4S ferredoxin-type 3" evidence="3">
    <location>
        <begin position="115"/>
        <end position="144"/>
    </location>
</feature>
<feature type="binding site" evidence="1">
    <location>
        <position position="46"/>
    </location>
    <ligand>
        <name>[4Fe-4S] cluster</name>
        <dbReference type="ChEBI" id="CHEBI:49883"/>
        <label>1</label>
    </ligand>
</feature>
<feature type="binding site" evidence="1">
    <location>
        <position position="49"/>
    </location>
    <ligand>
        <name>[4Fe-4S] cluster</name>
        <dbReference type="ChEBI" id="CHEBI:49883"/>
        <label>1</label>
    </ligand>
</feature>
<feature type="binding site" evidence="1">
    <location>
        <position position="52"/>
    </location>
    <ligand>
        <name>[4Fe-4S] cluster</name>
        <dbReference type="ChEBI" id="CHEBI:49883"/>
        <label>1</label>
    </ligand>
</feature>
<feature type="binding site" evidence="1">
    <location>
        <position position="56"/>
    </location>
    <ligand>
        <name>[4Fe-4S] cluster</name>
        <dbReference type="ChEBI" id="CHEBI:49883"/>
        <label>2</label>
    </ligand>
</feature>
<feature type="binding site" evidence="1">
    <location>
        <position position="92"/>
    </location>
    <ligand>
        <name>[4Fe-4S] cluster</name>
        <dbReference type="ChEBI" id="CHEBI:49883"/>
        <label>3</label>
    </ligand>
</feature>
<feature type="binding site" evidence="1">
    <location>
        <position position="95"/>
    </location>
    <ligand>
        <name>[4Fe-4S] cluster</name>
        <dbReference type="ChEBI" id="CHEBI:49883"/>
        <label>3</label>
    </ligand>
</feature>
<feature type="binding site" evidence="1">
    <location>
        <position position="100"/>
    </location>
    <ligand>
        <name>[4Fe-4S] cluster</name>
        <dbReference type="ChEBI" id="CHEBI:49883"/>
        <label>3</label>
    </ligand>
</feature>
<feature type="binding site" evidence="1">
    <location>
        <position position="104"/>
    </location>
    <ligand>
        <name>[4Fe-4S] cluster</name>
        <dbReference type="ChEBI" id="CHEBI:49883"/>
        <label>4</label>
    </ligand>
</feature>
<feature type="binding site" evidence="1">
    <location>
        <position position="124"/>
    </location>
    <ligand>
        <name>[4Fe-4S] cluster</name>
        <dbReference type="ChEBI" id="CHEBI:49883"/>
        <label>4</label>
    </ligand>
</feature>
<feature type="binding site" evidence="1">
    <location>
        <position position="127"/>
    </location>
    <ligand>
        <name>[4Fe-4S] cluster</name>
        <dbReference type="ChEBI" id="CHEBI:49883"/>
        <label>4</label>
    </ligand>
</feature>
<feature type="binding site" evidence="1">
    <location>
        <position position="130"/>
    </location>
    <ligand>
        <name>[4Fe-4S] cluster</name>
        <dbReference type="ChEBI" id="CHEBI:49883"/>
        <label>4</label>
    </ligand>
</feature>
<feature type="binding site" evidence="1">
    <location>
        <position position="134"/>
    </location>
    <ligand>
        <name>[4Fe-4S] cluster</name>
        <dbReference type="ChEBI" id="CHEBI:49883"/>
        <label>3</label>
    </ligand>
</feature>
<feature type="binding site" evidence="1">
    <location>
        <position position="151"/>
    </location>
    <ligand>
        <name>[4Fe-4S] cluster</name>
        <dbReference type="ChEBI" id="CHEBI:49883"/>
        <label>2</label>
    </ligand>
</feature>
<feature type="binding site" evidence="1">
    <location>
        <position position="154"/>
    </location>
    <ligand>
        <name>[4Fe-4S] cluster</name>
        <dbReference type="ChEBI" id="CHEBI:49883"/>
        <label>2</label>
    </ligand>
</feature>
<feature type="binding site" evidence="1">
    <location>
        <position position="167"/>
    </location>
    <ligand>
        <name>[4Fe-4S] cluster</name>
        <dbReference type="ChEBI" id="CHEBI:49883"/>
        <label>2</label>
    </ligand>
</feature>
<feature type="binding site" evidence="1">
    <location>
        <position position="171"/>
    </location>
    <ligand>
        <name>[4Fe-4S] cluster</name>
        <dbReference type="ChEBI" id="CHEBI:49883"/>
        <label>1</label>
    </ligand>
</feature>
<sequence length="222" mass="25052">MSFTRRKFVLGMGTVIFFTGSASSLLANTRQEKEVRYAMIHDESRCNGCNICARACRKTNHAPAQGSRLSIAHIPVTDNDNETQYHFFRQSCQHCEDAPCIDVCPTGASWRDEQGIVRVEKSQCIGCSYCIGACPYQVRYLNPVTKVADKCDFCAESRLAKGFPPICVSACPEHALIFGREDSPEIQAWLQDNKYYQYQLPGAGKPHLYRRFGQHLIKKENV</sequence>
<gene>
    <name type="primary">ydhX</name>
    <name type="ordered locus">Z2698</name>
    <name type="ordered locus">ECs2378</name>
</gene>
<reference key="1">
    <citation type="journal article" date="2001" name="Nature">
        <title>Genome sequence of enterohaemorrhagic Escherichia coli O157:H7.</title>
        <authorList>
            <person name="Perna N.T."/>
            <person name="Plunkett G. III"/>
            <person name="Burland V."/>
            <person name="Mau B."/>
            <person name="Glasner J.D."/>
            <person name="Rose D.J."/>
            <person name="Mayhew G.F."/>
            <person name="Evans P.S."/>
            <person name="Gregor J."/>
            <person name="Kirkpatrick H.A."/>
            <person name="Posfai G."/>
            <person name="Hackett J."/>
            <person name="Klink S."/>
            <person name="Boutin A."/>
            <person name="Shao Y."/>
            <person name="Miller L."/>
            <person name="Grotbeck E.J."/>
            <person name="Davis N.W."/>
            <person name="Lim A."/>
            <person name="Dimalanta E.T."/>
            <person name="Potamousis K."/>
            <person name="Apodaca J."/>
            <person name="Anantharaman T.S."/>
            <person name="Lin J."/>
            <person name="Yen G."/>
            <person name="Schwartz D.C."/>
            <person name="Welch R.A."/>
            <person name="Blattner F.R."/>
        </authorList>
    </citation>
    <scope>NUCLEOTIDE SEQUENCE [LARGE SCALE GENOMIC DNA]</scope>
    <source>
        <strain>O157:H7 / EDL933 / ATCC 700927 / EHEC</strain>
    </source>
</reference>
<reference key="2">
    <citation type="journal article" date="2001" name="DNA Res.">
        <title>Complete genome sequence of enterohemorrhagic Escherichia coli O157:H7 and genomic comparison with a laboratory strain K-12.</title>
        <authorList>
            <person name="Hayashi T."/>
            <person name="Makino K."/>
            <person name="Ohnishi M."/>
            <person name="Kurokawa K."/>
            <person name="Ishii K."/>
            <person name="Yokoyama K."/>
            <person name="Han C.-G."/>
            <person name="Ohtsubo E."/>
            <person name="Nakayama K."/>
            <person name="Murata T."/>
            <person name="Tanaka M."/>
            <person name="Tobe T."/>
            <person name="Iida T."/>
            <person name="Takami H."/>
            <person name="Honda T."/>
            <person name="Sasakawa C."/>
            <person name="Ogasawara N."/>
            <person name="Yasunaga T."/>
            <person name="Kuhara S."/>
            <person name="Shiba T."/>
            <person name="Hattori M."/>
            <person name="Shinagawa H."/>
        </authorList>
    </citation>
    <scope>NUCLEOTIDE SEQUENCE [LARGE SCALE GENOMIC DNA]</scope>
    <source>
        <strain>O157:H7 / Sakai / RIMD 0509952 / EHEC</strain>
    </source>
</reference>
<accession>Q8X616</accession>
<dbReference type="EMBL" id="AE005174">
    <property type="protein sequence ID" value="AAG56658.1"/>
    <property type="status" value="ALT_INIT"/>
    <property type="molecule type" value="Genomic_DNA"/>
</dbReference>
<dbReference type="EMBL" id="BA000007">
    <property type="protein sequence ID" value="BAB35801.1"/>
    <property type="status" value="ALT_INIT"/>
    <property type="molecule type" value="Genomic_DNA"/>
</dbReference>
<dbReference type="PIR" id="B90926">
    <property type="entry name" value="B90926"/>
</dbReference>
<dbReference type="PIR" id="F85774">
    <property type="entry name" value="F85774"/>
</dbReference>
<dbReference type="RefSeq" id="NP_310405.2">
    <property type="nucleotide sequence ID" value="NC_002695.1"/>
</dbReference>
<dbReference type="RefSeq" id="WP_001412436.1">
    <property type="nucleotide sequence ID" value="NZ_VOAI01000007.1"/>
</dbReference>
<dbReference type="SMR" id="Q8X616"/>
<dbReference type="STRING" id="155864.Z2698"/>
<dbReference type="GeneID" id="912453"/>
<dbReference type="KEGG" id="ece:Z2698"/>
<dbReference type="KEGG" id="ecs:ECs_2378"/>
<dbReference type="PATRIC" id="fig|386585.9.peg.2490"/>
<dbReference type="eggNOG" id="COG0437">
    <property type="taxonomic scope" value="Bacteria"/>
</dbReference>
<dbReference type="HOGENOM" id="CLU_043374_1_3_6"/>
<dbReference type="OMA" id="TNHAPAQ"/>
<dbReference type="Proteomes" id="UP000000558">
    <property type="component" value="Chromosome"/>
</dbReference>
<dbReference type="Proteomes" id="UP000002519">
    <property type="component" value="Chromosome"/>
</dbReference>
<dbReference type="GO" id="GO:0051539">
    <property type="term" value="F:4 iron, 4 sulfur cluster binding"/>
    <property type="evidence" value="ECO:0007669"/>
    <property type="project" value="UniProtKB-KW"/>
</dbReference>
<dbReference type="GO" id="GO:0046872">
    <property type="term" value="F:metal ion binding"/>
    <property type="evidence" value="ECO:0007669"/>
    <property type="project" value="UniProtKB-KW"/>
</dbReference>
<dbReference type="CDD" id="cd10551">
    <property type="entry name" value="PsrB"/>
    <property type="match status" value="1"/>
</dbReference>
<dbReference type="FunFam" id="3.30.70.20:FF:000014">
    <property type="entry name" value="Cytochrome c nitrite reductase, Fe-S protein"/>
    <property type="match status" value="1"/>
</dbReference>
<dbReference type="Gene3D" id="3.30.70.20">
    <property type="match status" value="2"/>
</dbReference>
<dbReference type="InterPro" id="IPR017896">
    <property type="entry name" value="4Fe4S_Fe-S-bd"/>
</dbReference>
<dbReference type="InterPro" id="IPR017900">
    <property type="entry name" value="4Fe4S_Fe_S_CS"/>
</dbReference>
<dbReference type="InterPro" id="IPR050954">
    <property type="entry name" value="ET_IronSulfur_Cluster-Binding"/>
</dbReference>
<dbReference type="PANTHER" id="PTHR43177">
    <property type="entry name" value="PROTEIN NRFC"/>
    <property type="match status" value="1"/>
</dbReference>
<dbReference type="PANTHER" id="PTHR43177:SF3">
    <property type="entry name" value="PROTEIN NRFC HOMOLOG"/>
    <property type="match status" value="1"/>
</dbReference>
<dbReference type="Pfam" id="PF13247">
    <property type="entry name" value="Fer4_11"/>
    <property type="match status" value="1"/>
</dbReference>
<dbReference type="SUPFAM" id="SSF54862">
    <property type="entry name" value="4Fe-4S ferredoxins"/>
    <property type="match status" value="1"/>
</dbReference>
<dbReference type="PROSITE" id="PS00198">
    <property type="entry name" value="4FE4S_FER_1"/>
    <property type="match status" value="1"/>
</dbReference>
<dbReference type="PROSITE" id="PS51379">
    <property type="entry name" value="4FE4S_FER_2"/>
    <property type="match status" value="3"/>
</dbReference>
<keyword id="KW-0004">4Fe-4S</keyword>
<keyword id="KW-0408">Iron</keyword>
<keyword id="KW-0411">Iron-sulfur</keyword>
<keyword id="KW-0479">Metal-binding</keyword>
<keyword id="KW-1185">Reference proteome</keyword>
<keyword id="KW-0677">Repeat</keyword>
<keyword id="KW-0732">Signal</keyword>
<comment type="PTM">
    <text>Predicted to be exported by the Tat system. The position of the signal peptide cleavage has not been experimentally proven.</text>
</comment>
<comment type="sequence caution" evidence="4">
    <conflict type="erroneous initiation">
        <sequence resource="EMBL-CDS" id="AAG56658"/>
    </conflict>
</comment>
<comment type="sequence caution" evidence="4">
    <conflict type="erroneous initiation">
        <sequence resource="EMBL-CDS" id="BAB35801"/>
    </conflict>
</comment>